<name>RPOD_SALTY</name>
<evidence type="ECO:0000255" key="1">
    <source>
        <dbReference type="HAMAP-Rule" id="MF_00963"/>
    </source>
</evidence>
<evidence type="ECO:0000256" key="2">
    <source>
        <dbReference type="SAM" id="MobiDB-lite"/>
    </source>
</evidence>
<evidence type="ECO:0000305" key="3"/>
<feature type="chain" id="PRO_0000093887" description="RNA polymerase sigma factor RpoD">
    <location>
        <begin position="1"/>
        <end position="615"/>
    </location>
</feature>
<feature type="DNA-binding region" description="H-T-H motif" evidence="1">
    <location>
        <begin position="575"/>
        <end position="594"/>
    </location>
</feature>
<feature type="region of interest" description="Disordered" evidence="2">
    <location>
        <begin position="177"/>
        <end position="215"/>
    </location>
</feature>
<feature type="region of interest" description="Sigma-70 factor domain-2" evidence="1">
    <location>
        <begin position="381"/>
        <end position="451"/>
    </location>
</feature>
<feature type="region of interest" description="Sigma-70 factor domain-3" evidence="1">
    <location>
        <begin position="460"/>
        <end position="536"/>
    </location>
</feature>
<feature type="region of interest" description="Sigma-70 factor domain-4" evidence="1">
    <location>
        <begin position="549"/>
        <end position="602"/>
    </location>
</feature>
<feature type="short sequence motif" description="Interaction with polymerase core subunit RpoC">
    <location>
        <begin position="405"/>
        <end position="408"/>
    </location>
</feature>
<feature type="compositionally biased region" description="Acidic residues" evidence="2">
    <location>
        <begin position="188"/>
        <end position="214"/>
    </location>
</feature>
<proteinExistence type="inferred from homology"/>
<protein>
    <recommendedName>
        <fullName evidence="1">RNA polymerase sigma factor RpoD</fullName>
    </recommendedName>
    <alternativeName>
        <fullName evidence="1">Sigma-70</fullName>
    </alternativeName>
</protein>
<reference key="1">
    <citation type="journal article" date="1985" name="Gene">
        <title>Nucleotide sequence of the rpsU-dnaG-rpoD operon from Salmonella typhimurium and a comparison of this sequence with the homologous operon of Escherichia coli.</title>
        <authorList>
            <person name="Erickson B.D."/>
            <person name="Burton Z.F."/>
            <person name="Watanabe K.K."/>
            <person name="Burgess R.R."/>
        </authorList>
    </citation>
    <scope>NUCLEOTIDE SEQUENCE [GENOMIC DNA]</scope>
</reference>
<reference key="2">
    <citation type="journal article" date="2001" name="Nature">
        <title>Complete genome sequence of Salmonella enterica serovar Typhimurium LT2.</title>
        <authorList>
            <person name="McClelland M."/>
            <person name="Sanderson K.E."/>
            <person name="Spieth J."/>
            <person name="Clifton S.W."/>
            <person name="Latreille P."/>
            <person name="Courtney L."/>
            <person name="Porwollik S."/>
            <person name="Ali J."/>
            <person name="Dante M."/>
            <person name="Du F."/>
            <person name="Hou S."/>
            <person name="Layman D."/>
            <person name="Leonard S."/>
            <person name="Nguyen C."/>
            <person name="Scott K."/>
            <person name="Holmes A."/>
            <person name="Grewal N."/>
            <person name="Mulvaney E."/>
            <person name="Ryan E."/>
            <person name="Sun H."/>
            <person name="Florea L."/>
            <person name="Miller W."/>
            <person name="Stoneking T."/>
            <person name="Nhan M."/>
            <person name="Waterston R."/>
            <person name="Wilson R.K."/>
        </authorList>
    </citation>
    <scope>NUCLEOTIDE SEQUENCE [LARGE SCALE GENOMIC DNA]</scope>
    <source>
        <strain>LT2 / SGSC1412 / ATCC 700720</strain>
    </source>
</reference>
<accession>P0A2E3</accession>
<accession>P07336</accession>
<accession>Q8Z3M4</accession>
<dbReference type="EMBL" id="M14427">
    <property type="protein sequence ID" value="AAA27242.1"/>
    <property type="molecule type" value="Genomic_DNA"/>
</dbReference>
<dbReference type="EMBL" id="AE006468">
    <property type="protein sequence ID" value="AAL22085.1"/>
    <property type="status" value="ALT_INIT"/>
    <property type="molecule type" value="Genomic_DNA"/>
</dbReference>
<dbReference type="PIR" id="C23985">
    <property type="entry name" value="RNEBST"/>
</dbReference>
<dbReference type="RefSeq" id="NP_462126.3">
    <property type="nucleotide sequence ID" value="NC_003197.2"/>
</dbReference>
<dbReference type="BMRB" id="P0A2E3"/>
<dbReference type="SMR" id="P0A2E3"/>
<dbReference type="STRING" id="99287.STM3211"/>
<dbReference type="PaxDb" id="99287-STM3211"/>
<dbReference type="GeneID" id="1254734"/>
<dbReference type="KEGG" id="stm:STM3211"/>
<dbReference type="PATRIC" id="fig|99287.12.peg.3407"/>
<dbReference type="HOGENOM" id="CLU_014793_7_0_6"/>
<dbReference type="PhylomeDB" id="P0A2E3"/>
<dbReference type="Proteomes" id="UP000001014">
    <property type="component" value="Chromosome"/>
</dbReference>
<dbReference type="GO" id="GO:0005737">
    <property type="term" value="C:cytoplasm"/>
    <property type="evidence" value="ECO:0007669"/>
    <property type="project" value="UniProtKB-SubCell"/>
</dbReference>
<dbReference type="GO" id="GO:0003677">
    <property type="term" value="F:DNA binding"/>
    <property type="evidence" value="ECO:0007669"/>
    <property type="project" value="UniProtKB-UniRule"/>
</dbReference>
<dbReference type="GO" id="GO:0016987">
    <property type="term" value="F:sigma factor activity"/>
    <property type="evidence" value="ECO:0007669"/>
    <property type="project" value="UniProtKB-UniRule"/>
</dbReference>
<dbReference type="GO" id="GO:0006352">
    <property type="term" value="P:DNA-templated transcription initiation"/>
    <property type="evidence" value="ECO:0007669"/>
    <property type="project" value="UniProtKB-UniRule"/>
</dbReference>
<dbReference type="CDD" id="cd06171">
    <property type="entry name" value="Sigma70_r4"/>
    <property type="match status" value="1"/>
</dbReference>
<dbReference type="FunFam" id="1.10.220.120:FF:000001">
    <property type="entry name" value="RNA polymerase sigma factor RpoD"/>
    <property type="match status" value="1"/>
</dbReference>
<dbReference type="FunFam" id="1.10.601.10:FF:000002">
    <property type="entry name" value="RNA polymerase sigma factor RpoD"/>
    <property type="match status" value="1"/>
</dbReference>
<dbReference type="FunFam" id="1.10.10.10:FF:000002">
    <property type="entry name" value="RNA polymerase sigma factor SigA"/>
    <property type="match status" value="1"/>
</dbReference>
<dbReference type="FunFam" id="1.10.10.10:FF:000004">
    <property type="entry name" value="RNA polymerase sigma factor SigA"/>
    <property type="match status" value="1"/>
</dbReference>
<dbReference type="Gene3D" id="1.10.601.10">
    <property type="entry name" value="RNA Polymerase Primary Sigma Factor"/>
    <property type="match status" value="1"/>
</dbReference>
<dbReference type="Gene3D" id="1.10.220.120">
    <property type="entry name" value="Sigma-70 factor, region 1.1"/>
    <property type="match status" value="1"/>
</dbReference>
<dbReference type="Gene3D" id="1.10.10.10">
    <property type="entry name" value="Winged helix-like DNA-binding domain superfamily/Winged helix DNA-binding domain"/>
    <property type="match status" value="2"/>
</dbReference>
<dbReference type="HAMAP" id="MF_00963">
    <property type="entry name" value="Sigma70_RpoD_SigA"/>
    <property type="match status" value="1"/>
</dbReference>
<dbReference type="InterPro" id="IPR014284">
    <property type="entry name" value="RNA_pol_sigma-70_dom"/>
</dbReference>
<dbReference type="InterPro" id="IPR000943">
    <property type="entry name" value="RNA_pol_sigma70"/>
</dbReference>
<dbReference type="InterPro" id="IPR009042">
    <property type="entry name" value="RNA_pol_sigma70_r1_2"/>
</dbReference>
<dbReference type="InterPro" id="IPR007627">
    <property type="entry name" value="RNA_pol_sigma70_r2"/>
</dbReference>
<dbReference type="InterPro" id="IPR007624">
    <property type="entry name" value="RNA_pol_sigma70_r3"/>
</dbReference>
<dbReference type="InterPro" id="IPR007630">
    <property type="entry name" value="RNA_pol_sigma70_r4"/>
</dbReference>
<dbReference type="InterPro" id="IPR007631">
    <property type="entry name" value="RNA_pol_sigma_70_non-ess"/>
</dbReference>
<dbReference type="InterPro" id="IPR007127">
    <property type="entry name" value="RNA_pol_sigma_70_r1_1"/>
</dbReference>
<dbReference type="InterPro" id="IPR042189">
    <property type="entry name" value="RNA_pol_sigma_70_r1_1_sf"/>
</dbReference>
<dbReference type="InterPro" id="IPR013325">
    <property type="entry name" value="RNA_pol_sigma_r2"/>
</dbReference>
<dbReference type="InterPro" id="IPR013324">
    <property type="entry name" value="RNA_pol_sigma_r3/r4-like"/>
</dbReference>
<dbReference type="InterPro" id="IPR012760">
    <property type="entry name" value="RNA_pol_sigma_RpoD_C"/>
</dbReference>
<dbReference type="InterPro" id="IPR050239">
    <property type="entry name" value="Sigma-70_RNA_pol_init_factors"/>
</dbReference>
<dbReference type="InterPro" id="IPR028630">
    <property type="entry name" value="Sigma70_RpoD"/>
</dbReference>
<dbReference type="InterPro" id="IPR036388">
    <property type="entry name" value="WH-like_DNA-bd_sf"/>
</dbReference>
<dbReference type="NCBIfam" id="NF004208">
    <property type="entry name" value="PRK05658.1"/>
    <property type="match status" value="1"/>
</dbReference>
<dbReference type="NCBIfam" id="TIGR02393">
    <property type="entry name" value="RpoD_Cterm"/>
    <property type="match status" value="1"/>
</dbReference>
<dbReference type="NCBIfam" id="TIGR02937">
    <property type="entry name" value="sigma70-ECF"/>
    <property type="match status" value="1"/>
</dbReference>
<dbReference type="PANTHER" id="PTHR30603">
    <property type="entry name" value="RNA POLYMERASE SIGMA FACTOR RPO"/>
    <property type="match status" value="1"/>
</dbReference>
<dbReference type="PANTHER" id="PTHR30603:SF60">
    <property type="entry name" value="RNA POLYMERASE SIGMA FACTOR RPOD"/>
    <property type="match status" value="1"/>
</dbReference>
<dbReference type="Pfam" id="PF04546">
    <property type="entry name" value="Sigma70_ner"/>
    <property type="match status" value="1"/>
</dbReference>
<dbReference type="Pfam" id="PF03979">
    <property type="entry name" value="Sigma70_r1_1"/>
    <property type="match status" value="1"/>
</dbReference>
<dbReference type="Pfam" id="PF00140">
    <property type="entry name" value="Sigma70_r1_2"/>
    <property type="match status" value="1"/>
</dbReference>
<dbReference type="Pfam" id="PF04542">
    <property type="entry name" value="Sigma70_r2"/>
    <property type="match status" value="1"/>
</dbReference>
<dbReference type="Pfam" id="PF04539">
    <property type="entry name" value="Sigma70_r3"/>
    <property type="match status" value="1"/>
</dbReference>
<dbReference type="Pfam" id="PF04545">
    <property type="entry name" value="Sigma70_r4"/>
    <property type="match status" value="1"/>
</dbReference>
<dbReference type="PRINTS" id="PR00046">
    <property type="entry name" value="SIGMA70FCT"/>
</dbReference>
<dbReference type="SUPFAM" id="SSF88946">
    <property type="entry name" value="Sigma2 domain of RNA polymerase sigma factors"/>
    <property type="match status" value="1"/>
</dbReference>
<dbReference type="SUPFAM" id="SSF88659">
    <property type="entry name" value="Sigma3 and sigma4 domains of RNA polymerase sigma factors"/>
    <property type="match status" value="2"/>
</dbReference>
<dbReference type="PROSITE" id="PS00715">
    <property type="entry name" value="SIGMA70_1"/>
    <property type="match status" value="1"/>
</dbReference>
<dbReference type="PROSITE" id="PS00716">
    <property type="entry name" value="SIGMA70_2"/>
    <property type="match status" value="1"/>
</dbReference>
<organism>
    <name type="scientific">Salmonella typhimurium (strain LT2 / SGSC1412 / ATCC 700720)</name>
    <dbReference type="NCBI Taxonomy" id="99287"/>
    <lineage>
        <taxon>Bacteria</taxon>
        <taxon>Pseudomonadati</taxon>
        <taxon>Pseudomonadota</taxon>
        <taxon>Gammaproteobacteria</taxon>
        <taxon>Enterobacterales</taxon>
        <taxon>Enterobacteriaceae</taxon>
        <taxon>Salmonella</taxon>
    </lineage>
</organism>
<gene>
    <name evidence="1" type="primary">rpoD</name>
    <name type="ordered locus">STM3211</name>
</gene>
<sequence length="615" mass="70531">MEQNPQSQLKLLVTRGKEQGYLTYAEVNDHLPEDIVDSDQIEDIIQMINDMGIQVMEEAPDADDLLLAENTTSTDEDAEEAAAQVLSSVESEIGRTTDPVRMYMREMGTVELLTREGEIDIAKRIEDGINQVQCSVAEYPEAITYLLEQYDRVEAEEARLSDLITGFVDPNAEEEMAPTATHVGSELSQEDLDDDEDEDEEDGDDDAADDDNSIDPELAREKFAELRAQYVVTRDTIKAKGRSHAAAQEEILKLSEVFKQFRLVPKQFDYLVNSMRVMMDRVRTQERLIMKLCVEQCKMPKKNFITLFTGNETSETWFNAAIAMNKPWSEKLHDVAEEVQRCLQKLRQIEEETGLTIEQVKDINRRMSIGEAKARRAKKEMVEANLRLVISIAKKYTNRGLQFLDLIQEGNIGLMKAVDKFEYRRGYKFSTYATWWIRQAITRSIADQARTIRIPVHMIETINKLNRISRQMLQEMGREPTPEELAERMLMPEDKIRKVLKIAKEPISMETPIGDDEDSHLGDFIEDTTLELPLDSATTESLRAATHDVLAGLTAREAKVLRMRFGIDMNTDHTLEEVGKQFDVTRERIRQIEAKALRKLRHPSRSEVLRSFLDD</sequence>
<keyword id="KW-0963">Cytoplasm</keyword>
<keyword id="KW-0238">DNA-binding</keyword>
<keyword id="KW-1185">Reference proteome</keyword>
<keyword id="KW-0731">Sigma factor</keyword>
<keyword id="KW-0804">Transcription</keyword>
<keyword id="KW-0805">Transcription regulation</keyword>
<comment type="function">
    <text evidence="1">Sigma factors are initiation factors that promote the attachment of RNA polymerase to specific initiation sites and are then released. This sigma factor is the primary sigma factor during exponential growth.</text>
</comment>
<comment type="subunit">
    <text evidence="1">Interacts transiently with the RNA polymerase catalytic core.</text>
</comment>
<comment type="subcellular location">
    <subcellularLocation>
        <location evidence="1">Cytoplasm</location>
    </subcellularLocation>
</comment>
<comment type="similarity">
    <text evidence="1">Belongs to the sigma-70 factor family. RpoD/SigA subfamily.</text>
</comment>
<comment type="sequence caution" evidence="3">
    <conflict type="erroneous initiation">
        <sequence resource="EMBL-CDS" id="AAL22085"/>
    </conflict>
</comment>